<protein>
    <recommendedName>
        <fullName>Diacetyl reductase [(S)-acetoin forming]</fullName>
        <ecNumber>1.1.1.304</ecNumber>
    </recommendedName>
    <alternativeName>
        <fullName>Acetoin(diacetyl) reductase</fullName>
        <shortName>AR</shortName>
    </alternativeName>
    <alternativeName>
        <fullName>Meso-2,3-butanediol dehydrogenase</fullName>
    </alternativeName>
</protein>
<feature type="chain" id="PRO_0000054540" description="Diacetyl reductase [(S)-acetoin forming]">
    <location>
        <begin position="1"/>
        <end position="258"/>
    </location>
</feature>
<feature type="active site" description="Proton acceptor" evidence="2">
    <location>
        <position position="154"/>
    </location>
</feature>
<feature type="active site" evidence="1">
    <location>
        <position position="158"/>
    </location>
</feature>
<feature type="binding site" evidence="1">
    <location>
        <begin position="8"/>
        <end position="32"/>
    </location>
    <ligand>
        <name>NAD(+)</name>
        <dbReference type="ChEBI" id="CHEBI:57540"/>
    </ligand>
</feature>
<feature type="binding site" evidence="1">
    <location>
        <position position="141"/>
    </location>
    <ligand>
        <name>substrate</name>
    </ligand>
</feature>
<reference key="1">
    <citation type="journal article" date="2001" name="Lancet">
        <title>Whole genome sequencing of meticillin-resistant Staphylococcus aureus.</title>
        <authorList>
            <person name="Kuroda M."/>
            <person name="Ohta T."/>
            <person name="Uchiyama I."/>
            <person name="Baba T."/>
            <person name="Yuzawa H."/>
            <person name="Kobayashi I."/>
            <person name="Cui L."/>
            <person name="Oguchi A."/>
            <person name="Aoki K."/>
            <person name="Nagai Y."/>
            <person name="Lian J.-Q."/>
            <person name="Ito T."/>
            <person name="Kanamori M."/>
            <person name="Matsumaru H."/>
            <person name="Maruyama A."/>
            <person name="Murakami H."/>
            <person name="Hosoyama A."/>
            <person name="Mizutani-Ui Y."/>
            <person name="Takahashi N.K."/>
            <person name="Sawano T."/>
            <person name="Inoue R."/>
            <person name="Kaito C."/>
            <person name="Sekimizu K."/>
            <person name="Hirakawa H."/>
            <person name="Kuhara S."/>
            <person name="Goto S."/>
            <person name="Yabuzaki J."/>
            <person name="Kanehisa M."/>
            <person name="Yamashita A."/>
            <person name="Oshima K."/>
            <person name="Furuya K."/>
            <person name="Yoshino C."/>
            <person name="Shiba T."/>
            <person name="Hattori M."/>
            <person name="Ogasawara N."/>
            <person name="Hayashi H."/>
            <person name="Hiramatsu K."/>
        </authorList>
    </citation>
    <scope>NUCLEOTIDE SEQUENCE [LARGE SCALE GENOMIC DNA]</scope>
    <source>
        <strain>Mu50 / ATCC 700699</strain>
    </source>
</reference>
<proteinExistence type="inferred from homology"/>
<organism>
    <name type="scientific">Staphylococcus aureus (strain Mu50 / ATCC 700699)</name>
    <dbReference type="NCBI Taxonomy" id="158878"/>
    <lineage>
        <taxon>Bacteria</taxon>
        <taxon>Bacillati</taxon>
        <taxon>Bacillota</taxon>
        <taxon>Bacilli</taxon>
        <taxon>Bacillales</taxon>
        <taxon>Staphylococcaceae</taxon>
        <taxon>Staphylococcus</taxon>
    </lineage>
</organism>
<evidence type="ECO:0000250" key="1"/>
<evidence type="ECO:0000255" key="2">
    <source>
        <dbReference type="PROSITE-ProRule" id="PRU10001"/>
    </source>
</evidence>
<evidence type="ECO:0000305" key="3"/>
<comment type="function">
    <text evidence="1">Catalyzes the irreversible reduction of 2,3-butanediol to (S)-acetoin in the presence of NADH.</text>
</comment>
<comment type="catalytic activity">
    <reaction>
        <text>(S)-acetoin + NAD(+) = diacetyl + NADH + H(+)</text>
        <dbReference type="Rhea" id="RHEA:27286"/>
        <dbReference type="ChEBI" id="CHEBI:15378"/>
        <dbReference type="ChEBI" id="CHEBI:15687"/>
        <dbReference type="ChEBI" id="CHEBI:16583"/>
        <dbReference type="ChEBI" id="CHEBI:57540"/>
        <dbReference type="ChEBI" id="CHEBI:57945"/>
        <dbReference type="EC" id="1.1.1.304"/>
    </reaction>
</comment>
<comment type="similarity">
    <text evidence="3">Belongs to the short-chain dehydrogenases/reductases (SDR) family.</text>
</comment>
<dbReference type="EC" id="1.1.1.304"/>
<dbReference type="EMBL" id="BA000017">
    <property type="protein sequence ID" value="BAB56288.1"/>
    <property type="molecule type" value="Genomic_DNA"/>
</dbReference>
<dbReference type="RefSeq" id="WP_000183771.1">
    <property type="nucleotide sequence ID" value="NC_002758.2"/>
</dbReference>
<dbReference type="SMR" id="P66775"/>
<dbReference type="KEGG" id="sav:SAV0126"/>
<dbReference type="HOGENOM" id="CLU_010194_1_0_9"/>
<dbReference type="PhylomeDB" id="P66775"/>
<dbReference type="Proteomes" id="UP000002481">
    <property type="component" value="Chromosome"/>
</dbReference>
<dbReference type="GO" id="GO:0052588">
    <property type="term" value="F:diacetyl reductase ((S)-acetoin forming) (NAD+) activity"/>
    <property type="evidence" value="ECO:0007669"/>
    <property type="project" value="UniProtKB-EC"/>
</dbReference>
<dbReference type="GO" id="GO:0045150">
    <property type="term" value="P:acetoin catabolic process"/>
    <property type="evidence" value="ECO:0007669"/>
    <property type="project" value="InterPro"/>
</dbReference>
<dbReference type="CDD" id="cd05366">
    <property type="entry name" value="meso-BDH-like_SDR_c"/>
    <property type="match status" value="1"/>
</dbReference>
<dbReference type="FunFam" id="3.40.50.720:FF:000084">
    <property type="entry name" value="Short-chain dehydrogenase reductase"/>
    <property type="match status" value="1"/>
</dbReference>
<dbReference type="Gene3D" id="3.40.50.720">
    <property type="entry name" value="NAD(P)-binding Rossmann-like Domain"/>
    <property type="match status" value="1"/>
</dbReference>
<dbReference type="InterPro" id="IPR014007">
    <property type="entry name" value="23BDH"/>
</dbReference>
<dbReference type="InterPro" id="IPR036291">
    <property type="entry name" value="NAD(P)-bd_dom_sf"/>
</dbReference>
<dbReference type="InterPro" id="IPR020904">
    <property type="entry name" value="Sc_DH/Rdtase_CS"/>
</dbReference>
<dbReference type="InterPro" id="IPR002347">
    <property type="entry name" value="SDR_fam"/>
</dbReference>
<dbReference type="NCBIfam" id="TIGR02415">
    <property type="entry name" value="23BDH"/>
    <property type="match status" value="1"/>
</dbReference>
<dbReference type="NCBIfam" id="NF005559">
    <property type="entry name" value="PRK07231.1"/>
    <property type="match status" value="1"/>
</dbReference>
<dbReference type="NCBIfam" id="NF006394">
    <property type="entry name" value="PRK08643.1"/>
    <property type="match status" value="1"/>
</dbReference>
<dbReference type="PANTHER" id="PTHR43639">
    <property type="entry name" value="OXIDOREDUCTASE, SHORT-CHAIN DEHYDROGENASE/REDUCTASE FAMILY (AFU_ORTHOLOGUE AFUA_5G02870)"/>
    <property type="match status" value="1"/>
</dbReference>
<dbReference type="PANTHER" id="PTHR43639:SF1">
    <property type="entry name" value="SHORT-CHAIN DEHYDROGENASE_REDUCTASE FAMILY PROTEIN"/>
    <property type="match status" value="1"/>
</dbReference>
<dbReference type="Pfam" id="PF00106">
    <property type="entry name" value="adh_short"/>
    <property type="match status" value="1"/>
</dbReference>
<dbReference type="PRINTS" id="PR00081">
    <property type="entry name" value="GDHRDH"/>
</dbReference>
<dbReference type="PRINTS" id="PR00080">
    <property type="entry name" value="SDRFAMILY"/>
</dbReference>
<dbReference type="SMART" id="SM00822">
    <property type="entry name" value="PKS_KR"/>
    <property type="match status" value="1"/>
</dbReference>
<dbReference type="SUPFAM" id="SSF51735">
    <property type="entry name" value="NAD(P)-binding Rossmann-fold domains"/>
    <property type="match status" value="1"/>
</dbReference>
<dbReference type="PROSITE" id="PS00061">
    <property type="entry name" value="ADH_SHORT"/>
    <property type="match status" value="1"/>
</dbReference>
<gene>
    <name type="primary">butA</name>
    <name type="ordered locus">SAV0126</name>
</gene>
<keyword id="KW-0520">NAD</keyword>
<keyword id="KW-0560">Oxidoreductase</keyword>
<accession>P66775</accession>
<accession>Q99X89</accession>
<sequence length="258" mass="27216">MTNNKVALVTGGAQGIGFKIAERLVEDGFKVAVVDFNEEGAKAAALKLSSDGTKAIAIKADVSNRDDVFNAVRQTAAQFGDFHVMVNNAGLGPTTPIDTITEEQFKTVYGVNVAGVLWGIQAAHEQFKKFNHGGKIINATSQAGVEGNPGLSLYCSTKFAVRGLTQVAAQDLASEGITVNAFAPGIVQTPMMESIAVATAEEAGKPEAWGWEQFTSQIALGRVSQPEDVSNVVSFLAGKDSDYITGQTIIVDGGMRFR</sequence>
<name>BUTA_STAAM</name>